<feature type="chain" id="PRO_0000203478" description="Uncharacterized protein YNR040W">
    <location>
        <begin position="1"/>
        <end position="256"/>
    </location>
</feature>
<dbReference type="EMBL" id="Z71655">
    <property type="protein sequence ID" value="CAA96320.1"/>
    <property type="molecule type" value="Genomic_DNA"/>
</dbReference>
<dbReference type="EMBL" id="BK006947">
    <property type="protein sequence ID" value="DAA10582.1"/>
    <property type="molecule type" value="Genomic_DNA"/>
</dbReference>
<dbReference type="PIR" id="S63371">
    <property type="entry name" value="S63371"/>
</dbReference>
<dbReference type="BioGRID" id="35866">
    <property type="interactions" value="55"/>
</dbReference>
<dbReference type="DIP" id="DIP-4207N"/>
<dbReference type="FunCoup" id="P53736">
    <property type="interactions" value="16"/>
</dbReference>
<dbReference type="IntAct" id="P53736">
    <property type="interactions" value="3"/>
</dbReference>
<dbReference type="STRING" id="4932.YNR040W"/>
<dbReference type="PaxDb" id="4932-YNR040W"/>
<dbReference type="PeptideAtlas" id="P53736"/>
<dbReference type="EnsemblFungi" id="YNR040W_mRNA">
    <property type="protein sequence ID" value="YNR040W"/>
    <property type="gene ID" value="YNR040W"/>
</dbReference>
<dbReference type="KEGG" id="sce:YNR040W"/>
<dbReference type="AGR" id="SGD:S000005323"/>
<dbReference type="SGD" id="S000005323">
    <property type="gene designation" value="YNR040W"/>
</dbReference>
<dbReference type="VEuPathDB" id="FungiDB:YNR040W"/>
<dbReference type="eggNOG" id="ENOG502RZCP">
    <property type="taxonomic scope" value="Eukaryota"/>
</dbReference>
<dbReference type="HOGENOM" id="CLU_081665_1_0_1"/>
<dbReference type="InParanoid" id="P53736"/>
<dbReference type="OMA" id="RFYIVNR"/>
<dbReference type="OrthoDB" id="4083656at2759"/>
<dbReference type="BioCyc" id="YEAST:G3O-33350-MONOMER"/>
<dbReference type="BioGRID-ORCS" id="855776">
    <property type="hits" value="10 hits in 10 CRISPR screens"/>
</dbReference>
<dbReference type="PRO" id="PR:P53736"/>
<dbReference type="Proteomes" id="UP000002311">
    <property type="component" value="Chromosome XIV"/>
</dbReference>
<dbReference type="RNAct" id="P53736">
    <property type="molecule type" value="protein"/>
</dbReference>
<dbReference type="GO" id="GO:0005743">
    <property type="term" value="C:mitochondrial inner membrane"/>
    <property type="evidence" value="ECO:0000314"/>
    <property type="project" value="SGD"/>
</dbReference>
<dbReference type="GO" id="GO:0005739">
    <property type="term" value="C:mitochondrion"/>
    <property type="evidence" value="ECO:0007005"/>
    <property type="project" value="SGD"/>
</dbReference>
<dbReference type="GO" id="GO:0097177">
    <property type="term" value="F:mitochondrial ribosome binding"/>
    <property type="evidence" value="ECO:0000314"/>
    <property type="project" value="SGD"/>
</dbReference>
<dbReference type="GO" id="GO:0032979">
    <property type="term" value="P:protein insertion into mitochondrial inner membrane from matrix"/>
    <property type="evidence" value="ECO:0000316"/>
    <property type="project" value="SGD"/>
</dbReference>
<accession>P53736</accession>
<accession>D6W1L6</accession>
<protein>
    <recommendedName>
        <fullName>Uncharacterized protein YNR040W</fullName>
    </recommendedName>
</protein>
<evidence type="ECO:0000269" key="1">
    <source>
    </source>
</evidence>
<organism>
    <name type="scientific">Saccharomyces cerevisiae (strain ATCC 204508 / S288c)</name>
    <name type="common">Baker's yeast</name>
    <dbReference type="NCBI Taxonomy" id="559292"/>
    <lineage>
        <taxon>Eukaryota</taxon>
        <taxon>Fungi</taxon>
        <taxon>Dikarya</taxon>
        <taxon>Ascomycota</taxon>
        <taxon>Saccharomycotina</taxon>
        <taxon>Saccharomycetes</taxon>
        <taxon>Saccharomycetales</taxon>
        <taxon>Saccharomycetaceae</taxon>
        <taxon>Saccharomyces</taxon>
    </lineage>
</organism>
<comment type="miscellaneous">
    <text evidence="1">Present with 1140 molecules/cell in log phase SD medium.</text>
</comment>
<keyword id="KW-1185">Reference proteome</keyword>
<proteinExistence type="evidence at protein level"/>
<reference key="1">
    <citation type="journal article" date="1997" name="Nature">
        <title>The nucleotide sequence of Saccharomyces cerevisiae chromosome XIV and its evolutionary implications.</title>
        <authorList>
            <person name="Philippsen P."/>
            <person name="Kleine K."/>
            <person name="Poehlmann R."/>
            <person name="Duesterhoeft A."/>
            <person name="Hamberg K."/>
            <person name="Hegemann J.H."/>
            <person name="Obermaier B."/>
            <person name="Urrestarazu L.A."/>
            <person name="Aert R."/>
            <person name="Albermann K."/>
            <person name="Altmann R."/>
            <person name="Andre B."/>
            <person name="Baladron V."/>
            <person name="Ballesta J.P.G."/>
            <person name="Becam A.-M."/>
            <person name="Beinhauer J.D."/>
            <person name="Boskovic J."/>
            <person name="Buitrago M.J."/>
            <person name="Bussereau F."/>
            <person name="Coster F."/>
            <person name="Crouzet M."/>
            <person name="D'Angelo M."/>
            <person name="Dal Pero F."/>
            <person name="De Antoni A."/>
            <person name="del Rey F."/>
            <person name="Doignon F."/>
            <person name="Domdey H."/>
            <person name="Dubois E."/>
            <person name="Fiedler T.A."/>
            <person name="Fleig U."/>
            <person name="Floeth M."/>
            <person name="Fritz C."/>
            <person name="Gaillardin C."/>
            <person name="Garcia-Cantalejo J.M."/>
            <person name="Glansdorff N."/>
            <person name="Goffeau A."/>
            <person name="Gueldener U."/>
            <person name="Herbert C.J."/>
            <person name="Heumann K."/>
            <person name="Heuss-Neitzel D."/>
            <person name="Hilbert H."/>
            <person name="Hinni K."/>
            <person name="Iraqui Houssaini I."/>
            <person name="Jacquet M."/>
            <person name="Jimenez A."/>
            <person name="Jonniaux J.-L."/>
            <person name="Karpfinger-Hartl L."/>
            <person name="Lanfranchi G."/>
            <person name="Lepingle A."/>
            <person name="Levesque H."/>
            <person name="Lyck R."/>
            <person name="Maftahi M."/>
            <person name="Mallet L."/>
            <person name="Maurer C.T.C."/>
            <person name="Messenguy F."/>
            <person name="Mewes H.-W."/>
            <person name="Moestl D."/>
            <person name="Nasr F."/>
            <person name="Nicaud J.-M."/>
            <person name="Niedenthal R.K."/>
            <person name="Pandolfo D."/>
            <person name="Pierard A."/>
            <person name="Piravandi E."/>
            <person name="Planta R.J."/>
            <person name="Pohl T.M."/>
            <person name="Purnelle B."/>
            <person name="Rebischung C."/>
            <person name="Remacha M.A."/>
            <person name="Revuelta J.L."/>
            <person name="Rinke M."/>
            <person name="Saiz J.E."/>
            <person name="Sartorello F."/>
            <person name="Scherens B."/>
            <person name="Sen-Gupta M."/>
            <person name="Soler-Mira A."/>
            <person name="Urbanus J.H.M."/>
            <person name="Valle G."/>
            <person name="Van Dyck L."/>
            <person name="Verhasselt P."/>
            <person name="Vierendeels F."/>
            <person name="Vissers S."/>
            <person name="Voet M."/>
            <person name="Volckaert G."/>
            <person name="Wach A."/>
            <person name="Wambutt R."/>
            <person name="Wedler H."/>
            <person name="Zollner A."/>
            <person name="Hani J."/>
        </authorList>
    </citation>
    <scope>NUCLEOTIDE SEQUENCE [LARGE SCALE GENOMIC DNA]</scope>
    <source>
        <strain>ATCC 204508 / S288c</strain>
    </source>
</reference>
<reference key="2">
    <citation type="journal article" date="2014" name="G3 (Bethesda)">
        <title>The reference genome sequence of Saccharomyces cerevisiae: Then and now.</title>
        <authorList>
            <person name="Engel S.R."/>
            <person name="Dietrich F.S."/>
            <person name="Fisk D.G."/>
            <person name="Binkley G."/>
            <person name="Balakrishnan R."/>
            <person name="Costanzo M.C."/>
            <person name="Dwight S.S."/>
            <person name="Hitz B.C."/>
            <person name="Karra K."/>
            <person name="Nash R.S."/>
            <person name="Weng S."/>
            <person name="Wong E.D."/>
            <person name="Lloyd P."/>
            <person name="Skrzypek M.S."/>
            <person name="Miyasato S.R."/>
            <person name="Simison M."/>
            <person name="Cherry J.M."/>
        </authorList>
    </citation>
    <scope>GENOME REANNOTATION</scope>
    <source>
        <strain>ATCC 204508 / S288c</strain>
    </source>
</reference>
<reference key="3">
    <citation type="journal article" date="2003" name="Nature">
        <title>Global analysis of protein expression in yeast.</title>
        <authorList>
            <person name="Ghaemmaghami S."/>
            <person name="Huh W.-K."/>
            <person name="Bower K."/>
            <person name="Howson R.W."/>
            <person name="Belle A."/>
            <person name="Dephoure N."/>
            <person name="O'Shea E.K."/>
            <person name="Weissman J.S."/>
        </authorList>
    </citation>
    <scope>LEVEL OF PROTEIN EXPRESSION [LARGE SCALE ANALYSIS]</scope>
</reference>
<name>YN8O_YEAST</name>
<gene>
    <name type="ordered locus">YNR040W</name>
    <name type="ORF">N3407</name>
</gene>
<sequence length="256" mass="28636">MTNMAAKNQFKGSSFTLAQLIEEVGRNGGKKPVFQYKVPRSIRWASTALAVVFLTYGAAYTDMSWRTAREVYGNATEEEKHSPWFKCKTFGPVALGVLPVILAAATKHVTSRLVTEMKYLPPLKNSTVPRCQLTRRTYLLGRPVSITREINELSKNKATKIFTGVGSQGMEDKATFVFFTVDEKAPSFFNKFYIFSRSGSVVKNDARILDCFFNSVAENKLLNRSILTQILSHTSAKTLFHSGNSRSSIKNIVKPK</sequence>